<organism>
    <name type="scientific">Streptococcus pneumoniae (strain JJA)</name>
    <dbReference type="NCBI Taxonomy" id="488222"/>
    <lineage>
        <taxon>Bacteria</taxon>
        <taxon>Bacillati</taxon>
        <taxon>Bacillota</taxon>
        <taxon>Bacilli</taxon>
        <taxon>Lactobacillales</taxon>
        <taxon>Streptococcaceae</taxon>
        <taxon>Streptococcus</taxon>
    </lineage>
</organism>
<keyword id="KW-0028">Amino-acid biosynthesis</keyword>
<keyword id="KW-0100">Branched-chain amino acid biosynthesis</keyword>
<keyword id="KW-0460">Magnesium</keyword>
<keyword id="KW-0479">Metal-binding</keyword>
<keyword id="KW-0521">NADP</keyword>
<keyword id="KW-0560">Oxidoreductase</keyword>
<reference key="1">
    <citation type="journal article" date="2010" name="Genome Biol.">
        <title>Structure and dynamics of the pan-genome of Streptococcus pneumoniae and closely related species.</title>
        <authorList>
            <person name="Donati C."/>
            <person name="Hiller N.L."/>
            <person name="Tettelin H."/>
            <person name="Muzzi A."/>
            <person name="Croucher N.J."/>
            <person name="Angiuoli S.V."/>
            <person name="Oggioni M."/>
            <person name="Dunning Hotopp J.C."/>
            <person name="Hu F.Z."/>
            <person name="Riley D.R."/>
            <person name="Covacci A."/>
            <person name="Mitchell T.J."/>
            <person name="Bentley S.D."/>
            <person name="Kilian M."/>
            <person name="Ehrlich G.D."/>
            <person name="Rappuoli R."/>
            <person name="Moxon E.R."/>
            <person name="Masignani V."/>
        </authorList>
    </citation>
    <scope>NUCLEOTIDE SEQUENCE [LARGE SCALE GENOMIC DNA]</scope>
    <source>
        <strain>JJA</strain>
    </source>
</reference>
<gene>
    <name evidence="1" type="primary">ilvC</name>
    <name type="ordered locus">SPJ_0430</name>
</gene>
<name>ILVC_STRZJ</name>
<accession>C1CCK9</accession>
<comment type="function">
    <text evidence="1">Involved in the biosynthesis of branched-chain amino acids (BCAA). Catalyzes an alkyl-migration followed by a ketol-acid reduction of (S)-2-acetolactate (S2AL) to yield (R)-2,3-dihydroxy-isovalerate. In the isomerase reaction, S2AL is rearranged via a Mg-dependent methyl migration to produce 3-hydroxy-3-methyl-2-ketobutyrate (HMKB). In the reductase reaction, this 2-ketoacid undergoes a metal-dependent reduction by NADPH to yield (R)-2,3-dihydroxy-isovalerate.</text>
</comment>
<comment type="catalytic activity">
    <reaction evidence="1">
        <text>(2R)-2,3-dihydroxy-3-methylbutanoate + NADP(+) = (2S)-2-acetolactate + NADPH + H(+)</text>
        <dbReference type="Rhea" id="RHEA:22068"/>
        <dbReference type="ChEBI" id="CHEBI:15378"/>
        <dbReference type="ChEBI" id="CHEBI:49072"/>
        <dbReference type="ChEBI" id="CHEBI:57783"/>
        <dbReference type="ChEBI" id="CHEBI:58349"/>
        <dbReference type="ChEBI" id="CHEBI:58476"/>
        <dbReference type="EC" id="1.1.1.86"/>
    </reaction>
</comment>
<comment type="catalytic activity">
    <reaction evidence="1">
        <text>(2R,3R)-2,3-dihydroxy-3-methylpentanoate + NADP(+) = (S)-2-ethyl-2-hydroxy-3-oxobutanoate + NADPH + H(+)</text>
        <dbReference type="Rhea" id="RHEA:13493"/>
        <dbReference type="ChEBI" id="CHEBI:15378"/>
        <dbReference type="ChEBI" id="CHEBI:49256"/>
        <dbReference type="ChEBI" id="CHEBI:49258"/>
        <dbReference type="ChEBI" id="CHEBI:57783"/>
        <dbReference type="ChEBI" id="CHEBI:58349"/>
        <dbReference type="EC" id="1.1.1.86"/>
    </reaction>
</comment>
<comment type="cofactor">
    <cofactor evidence="1">
        <name>Mg(2+)</name>
        <dbReference type="ChEBI" id="CHEBI:18420"/>
    </cofactor>
    <text evidence="1">Binds 2 magnesium ions per subunit.</text>
</comment>
<comment type="pathway">
    <text evidence="1">Amino-acid biosynthesis; L-isoleucine biosynthesis; L-isoleucine from 2-oxobutanoate: step 2/4.</text>
</comment>
<comment type="pathway">
    <text evidence="1">Amino-acid biosynthesis; L-valine biosynthesis; L-valine from pyruvate: step 2/4.</text>
</comment>
<comment type="similarity">
    <text evidence="1">Belongs to the ketol-acid reductoisomerase family.</text>
</comment>
<protein>
    <recommendedName>
        <fullName evidence="1">Ketol-acid reductoisomerase (NADP(+))</fullName>
        <shortName evidence="1">KARI</shortName>
        <ecNumber evidence="1">1.1.1.86</ecNumber>
    </recommendedName>
    <alternativeName>
        <fullName evidence="1">Acetohydroxy-acid isomeroreductase</fullName>
        <shortName evidence="1">AHIR</shortName>
    </alternativeName>
    <alternativeName>
        <fullName evidence="1">Alpha-keto-beta-hydroxylacyl reductoisomerase</fullName>
    </alternativeName>
    <alternativeName>
        <fullName evidence="1">Ketol-acid reductoisomerase type 1</fullName>
    </alternativeName>
    <alternativeName>
        <fullName evidence="1">Ketol-acid reductoisomerase type I</fullName>
    </alternativeName>
</protein>
<dbReference type="EC" id="1.1.1.86" evidence="1"/>
<dbReference type="EMBL" id="CP000919">
    <property type="protein sequence ID" value="ACO18815.1"/>
    <property type="molecule type" value="Genomic_DNA"/>
</dbReference>
<dbReference type="RefSeq" id="WP_000218054.1">
    <property type="nucleotide sequence ID" value="NC_012466.1"/>
</dbReference>
<dbReference type="SMR" id="C1CCK9"/>
<dbReference type="GeneID" id="45652102"/>
<dbReference type="KEGG" id="sjj:SPJ_0430"/>
<dbReference type="HOGENOM" id="CLU_033821_0_1_9"/>
<dbReference type="UniPathway" id="UPA00047">
    <property type="reaction ID" value="UER00056"/>
</dbReference>
<dbReference type="UniPathway" id="UPA00049">
    <property type="reaction ID" value="UER00060"/>
</dbReference>
<dbReference type="Proteomes" id="UP000002206">
    <property type="component" value="Chromosome"/>
</dbReference>
<dbReference type="GO" id="GO:0005829">
    <property type="term" value="C:cytosol"/>
    <property type="evidence" value="ECO:0007669"/>
    <property type="project" value="TreeGrafter"/>
</dbReference>
<dbReference type="GO" id="GO:0004455">
    <property type="term" value="F:ketol-acid reductoisomerase activity"/>
    <property type="evidence" value="ECO:0007669"/>
    <property type="project" value="UniProtKB-UniRule"/>
</dbReference>
<dbReference type="GO" id="GO:0000287">
    <property type="term" value="F:magnesium ion binding"/>
    <property type="evidence" value="ECO:0007669"/>
    <property type="project" value="UniProtKB-UniRule"/>
</dbReference>
<dbReference type="GO" id="GO:0050661">
    <property type="term" value="F:NADP binding"/>
    <property type="evidence" value="ECO:0007669"/>
    <property type="project" value="InterPro"/>
</dbReference>
<dbReference type="GO" id="GO:0009097">
    <property type="term" value="P:isoleucine biosynthetic process"/>
    <property type="evidence" value="ECO:0007669"/>
    <property type="project" value="UniProtKB-UniRule"/>
</dbReference>
<dbReference type="GO" id="GO:0009099">
    <property type="term" value="P:L-valine biosynthetic process"/>
    <property type="evidence" value="ECO:0007669"/>
    <property type="project" value="UniProtKB-UniRule"/>
</dbReference>
<dbReference type="FunFam" id="3.40.50.720:FF:000023">
    <property type="entry name" value="Ketol-acid reductoisomerase (NADP(+))"/>
    <property type="match status" value="1"/>
</dbReference>
<dbReference type="Gene3D" id="6.10.240.10">
    <property type="match status" value="1"/>
</dbReference>
<dbReference type="Gene3D" id="3.40.50.720">
    <property type="entry name" value="NAD(P)-binding Rossmann-like Domain"/>
    <property type="match status" value="1"/>
</dbReference>
<dbReference type="HAMAP" id="MF_00435">
    <property type="entry name" value="IlvC"/>
    <property type="match status" value="1"/>
</dbReference>
<dbReference type="InterPro" id="IPR008927">
    <property type="entry name" value="6-PGluconate_DH-like_C_sf"/>
</dbReference>
<dbReference type="InterPro" id="IPR013023">
    <property type="entry name" value="KARI"/>
</dbReference>
<dbReference type="InterPro" id="IPR000506">
    <property type="entry name" value="KARI_C"/>
</dbReference>
<dbReference type="InterPro" id="IPR013116">
    <property type="entry name" value="KARI_N"/>
</dbReference>
<dbReference type="InterPro" id="IPR014359">
    <property type="entry name" value="KARI_prok"/>
</dbReference>
<dbReference type="InterPro" id="IPR036291">
    <property type="entry name" value="NAD(P)-bd_dom_sf"/>
</dbReference>
<dbReference type="NCBIfam" id="TIGR00465">
    <property type="entry name" value="ilvC"/>
    <property type="match status" value="1"/>
</dbReference>
<dbReference type="NCBIfam" id="NF004017">
    <property type="entry name" value="PRK05479.1"/>
    <property type="match status" value="1"/>
</dbReference>
<dbReference type="NCBIfam" id="NF009940">
    <property type="entry name" value="PRK13403.1"/>
    <property type="match status" value="1"/>
</dbReference>
<dbReference type="PANTHER" id="PTHR21371">
    <property type="entry name" value="KETOL-ACID REDUCTOISOMERASE, MITOCHONDRIAL"/>
    <property type="match status" value="1"/>
</dbReference>
<dbReference type="PANTHER" id="PTHR21371:SF1">
    <property type="entry name" value="KETOL-ACID REDUCTOISOMERASE, MITOCHONDRIAL"/>
    <property type="match status" value="1"/>
</dbReference>
<dbReference type="Pfam" id="PF01450">
    <property type="entry name" value="KARI_C"/>
    <property type="match status" value="1"/>
</dbReference>
<dbReference type="Pfam" id="PF07991">
    <property type="entry name" value="KARI_N"/>
    <property type="match status" value="1"/>
</dbReference>
<dbReference type="PIRSF" id="PIRSF000116">
    <property type="entry name" value="IlvC_gammaproteo"/>
    <property type="match status" value="1"/>
</dbReference>
<dbReference type="SUPFAM" id="SSF48179">
    <property type="entry name" value="6-phosphogluconate dehydrogenase C-terminal domain-like"/>
    <property type="match status" value="1"/>
</dbReference>
<dbReference type="SUPFAM" id="SSF51735">
    <property type="entry name" value="NAD(P)-binding Rossmann-fold domains"/>
    <property type="match status" value="1"/>
</dbReference>
<dbReference type="PROSITE" id="PS51851">
    <property type="entry name" value="KARI_C"/>
    <property type="match status" value="1"/>
</dbReference>
<dbReference type="PROSITE" id="PS51850">
    <property type="entry name" value="KARI_N"/>
    <property type="match status" value="1"/>
</dbReference>
<feature type="chain" id="PRO_1000191000" description="Ketol-acid reductoisomerase (NADP(+))">
    <location>
        <begin position="1"/>
        <end position="340"/>
    </location>
</feature>
<feature type="domain" description="KARI N-terminal Rossmann" evidence="2">
    <location>
        <begin position="3"/>
        <end position="182"/>
    </location>
</feature>
<feature type="domain" description="KARI C-terminal knotted" evidence="3">
    <location>
        <begin position="183"/>
        <end position="328"/>
    </location>
</feature>
<feature type="active site" evidence="1">
    <location>
        <position position="108"/>
    </location>
</feature>
<feature type="binding site" evidence="1">
    <location>
        <begin position="26"/>
        <end position="29"/>
    </location>
    <ligand>
        <name>NADP(+)</name>
        <dbReference type="ChEBI" id="CHEBI:58349"/>
    </ligand>
</feature>
<feature type="binding site" evidence="1">
    <location>
        <position position="49"/>
    </location>
    <ligand>
        <name>NADP(+)</name>
        <dbReference type="ChEBI" id="CHEBI:58349"/>
    </ligand>
</feature>
<feature type="binding site" evidence="1">
    <location>
        <position position="53"/>
    </location>
    <ligand>
        <name>NADP(+)</name>
        <dbReference type="ChEBI" id="CHEBI:58349"/>
    </ligand>
</feature>
<feature type="binding site" evidence="1">
    <location>
        <begin position="83"/>
        <end position="86"/>
    </location>
    <ligand>
        <name>NADP(+)</name>
        <dbReference type="ChEBI" id="CHEBI:58349"/>
    </ligand>
</feature>
<feature type="binding site" evidence="1">
    <location>
        <position position="134"/>
    </location>
    <ligand>
        <name>NADP(+)</name>
        <dbReference type="ChEBI" id="CHEBI:58349"/>
    </ligand>
</feature>
<feature type="binding site" evidence="1">
    <location>
        <position position="191"/>
    </location>
    <ligand>
        <name>Mg(2+)</name>
        <dbReference type="ChEBI" id="CHEBI:18420"/>
        <label>1</label>
    </ligand>
</feature>
<feature type="binding site" evidence="1">
    <location>
        <position position="191"/>
    </location>
    <ligand>
        <name>Mg(2+)</name>
        <dbReference type="ChEBI" id="CHEBI:18420"/>
        <label>2</label>
    </ligand>
</feature>
<feature type="binding site" evidence="1">
    <location>
        <position position="195"/>
    </location>
    <ligand>
        <name>Mg(2+)</name>
        <dbReference type="ChEBI" id="CHEBI:18420"/>
        <label>1</label>
    </ligand>
</feature>
<feature type="binding site" evidence="1">
    <location>
        <position position="227"/>
    </location>
    <ligand>
        <name>Mg(2+)</name>
        <dbReference type="ChEBI" id="CHEBI:18420"/>
        <label>2</label>
    </ligand>
</feature>
<feature type="binding site" evidence="1">
    <location>
        <position position="231"/>
    </location>
    <ligand>
        <name>Mg(2+)</name>
        <dbReference type="ChEBI" id="CHEBI:18420"/>
        <label>2</label>
    </ligand>
</feature>
<feature type="binding site" evidence="1">
    <location>
        <position position="252"/>
    </location>
    <ligand>
        <name>substrate</name>
    </ligand>
</feature>
<proteinExistence type="inferred from homology"/>
<sequence>MTVQMEYEKDVKVAALDGKKIAVIGYGSQGHAHAQNLRDSGRDVIIGVRPGKSFDKAKEDGFDTYTVAEATKLADVIMILAPDEIQQELYEAEIAPNLEAGNAVGFAHGFNIHFEFIKVPADVDVFMCAPKGPGHLVRRTYEEGFGVPALYAVYQDATGNAKNIAMDWCKGVGAARVGLLETTYKEETEEDLFGEQAVLCGGLTALIEAGFEVLTEAGYAPELAYFEVLHEMKLIVDLIYEGGFKKMRQSISNTAEYGDYVSGPRVITEQVKENMKAVLADIQNGKFANDFVNDYKAGRPKLTAYREQAANLEIEKVGAELRKAMPFVGKNDDDAFKIYN</sequence>
<evidence type="ECO:0000255" key="1">
    <source>
        <dbReference type="HAMAP-Rule" id="MF_00435"/>
    </source>
</evidence>
<evidence type="ECO:0000255" key="2">
    <source>
        <dbReference type="PROSITE-ProRule" id="PRU01197"/>
    </source>
</evidence>
<evidence type="ECO:0000255" key="3">
    <source>
        <dbReference type="PROSITE-ProRule" id="PRU01198"/>
    </source>
</evidence>